<feature type="initiator methionine" description="Removed" evidence="3 5">
    <location>
        <position position="1"/>
    </location>
</feature>
<feature type="chain" id="PRO_0000193543" description="Cytochrome b-c1 complex subunit 8">
    <location>
        <begin position="2"/>
        <end position="82"/>
    </location>
</feature>
<feature type="topological domain" description="Mitochondrial matrix" evidence="6">
    <location>
        <begin position="2"/>
        <end position="39"/>
    </location>
</feature>
<feature type="transmembrane region" description="Helical" evidence="6">
    <location>
        <begin position="40"/>
        <end position="68"/>
    </location>
</feature>
<feature type="topological domain" description="Mitochondrial intermembrane" evidence="6">
    <location>
        <begin position="69"/>
        <end position="82"/>
    </location>
</feature>
<feature type="modified residue" description="N6-acetyllysine; alternate" evidence="2">
    <location>
        <position position="33"/>
    </location>
</feature>
<feature type="modified residue" description="N6-succinyllysine; alternate" evidence="2">
    <location>
        <position position="33"/>
    </location>
</feature>
<feature type="sequence conflict" description="In Ref. 3; AA sequence." evidence="7" ref="3">
    <original>W</original>
    <variation>C</variation>
    <location>
        <position position="62"/>
    </location>
</feature>
<feature type="strand" evidence="10">
    <location>
        <begin position="5"/>
        <end position="8"/>
    </location>
</feature>
<feature type="strand" evidence="11">
    <location>
        <begin position="12"/>
        <end position="19"/>
    </location>
</feature>
<feature type="turn" evidence="11">
    <location>
        <begin position="21"/>
        <end position="23"/>
    </location>
</feature>
<feature type="strand" evidence="12">
    <location>
        <begin position="26"/>
        <end position="29"/>
    </location>
</feature>
<feature type="helix" evidence="11">
    <location>
        <begin position="30"/>
        <end position="69"/>
    </location>
</feature>
<feature type="turn" evidence="9">
    <location>
        <begin position="71"/>
        <end position="73"/>
    </location>
</feature>
<feature type="turn" evidence="8">
    <location>
        <begin position="74"/>
        <end position="76"/>
    </location>
</feature>
<feature type="turn" evidence="13">
    <location>
        <begin position="78"/>
        <end position="80"/>
    </location>
</feature>
<accession>P13271</accession>
<accession>Q3ZBT9</accession>
<evidence type="ECO:0000250" key="1">
    <source>
        <dbReference type="UniProtKB" id="P08525"/>
    </source>
</evidence>
<evidence type="ECO:0000250" key="2">
    <source>
        <dbReference type="UniProtKB" id="Q9CQ69"/>
    </source>
</evidence>
<evidence type="ECO:0000269" key="3">
    <source>
    </source>
</evidence>
<evidence type="ECO:0000269" key="4">
    <source>
    </source>
</evidence>
<evidence type="ECO:0000269" key="5">
    <source>
    </source>
</evidence>
<evidence type="ECO:0000269" key="6">
    <source>
    </source>
</evidence>
<evidence type="ECO:0000305" key="7"/>
<evidence type="ECO:0007829" key="8">
    <source>
        <dbReference type="PDB" id="1BE3"/>
    </source>
</evidence>
<evidence type="ECO:0007829" key="9">
    <source>
        <dbReference type="PDB" id="1L0L"/>
    </source>
</evidence>
<evidence type="ECO:0007829" key="10">
    <source>
        <dbReference type="PDB" id="1L0N"/>
    </source>
</evidence>
<evidence type="ECO:0007829" key="11">
    <source>
        <dbReference type="PDB" id="1PP9"/>
    </source>
</evidence>
<evidence type="ECO:0007829" key="12">
    <source>
        <dbReference type="PDB" id="1SQB"/>
    </source>
</evidence>
<evidence type="ECO:0007829" key="13">
    <source>
        <dbReference type="PDB" id="8P65"/>
    </source>
</evidence>
<sequence length="82" mass="9720">MGRQFGHLTRVRHVITYSLSPFEQRAFPHYFSKGIPNVLRRTRACILRVAPPFVAFYLVYTWGTQEFEKSKRKNPAAYENDR</sequence>
<gene>
    <name type="primary">UQCRQ</name>
</gene>
<comment type="function">
    <text evidence="1">Component of the ubiquinol-cytochrome c oxidoreductase, a multisubunit transmembrane complex that is part of the mitochondrial electron transport chain which drives oxidative phosphorylation. The respiratory chain contains 3 multisubunit complexes succinate dehydrogenase (complex II, CII), ubiquinol-cytochrome c oxidoreductase (cytochrome b-c1 complex, complex III, CIII) and cytochrome c oxidase (complex IV, CIV), that cooperate to transfer electrons derived from NADH and succinate to molecular oxygen, creating an electrochemical gradient over the inner membrane that drives transmembrane transport and the ATP synthase. The cytochrome b-c1 complex catalyzes electron transfer from ubiquinol to cytochrome c, linking this redox reaction to translocation of protons across the mitochondrial inner membrane, with protons being carried across the membrane as hydrogens on the quinol. In the process called Q cycle, 2 protons are consumed from the matrix, 4 protons are released into the intermembrane space and 2 electrons are passed to cytochrome c.</text>
</comment>
<comment type="subunit">
    <text evidence="2 4 6">Component of the ubiquinol-cytochrome c oxidoreductase (cytochrome b-c1 complex, complex III, CIII), a multisubunit enzyme composed of 11 subunits. The complex is composed of 3 respiratory subunits cytochrome b, cytochrome c1 and Rieske protein UQCRFS1, 2 core protein subunits UQCRC1/QCR1 and UQCRC2/QCR2, and 6 low-molecular weight protein subunits UQCRH/QCR6, UQCRB/QCR7, UQCRQ/QCR8, UQCR10/QCR9, UQCR11/QCR10 and subunit 9, the cleavage product of Rieske protein UQCRFS1 (PubMed:9651245). The complex exists as an obligatory dimer and forms supercomplexes (SCs) in the inner mitochondrial membrane with NADH-ubiquinone oxidoreductase (complex I, CI) and cytochrome c oxidase (complex IV, CIV), resulting in different assemblies (supercomplex SCI(1)III(2)IV(1) and megacomplex MCI(2)III(2)IV(2)) (PubMed:27830641). Interacts with UQCC6 (By similarity).</text>
</comment>
<comment type="subcellular location">
    <subcellularLocation>
        <location evidence="1">Mitochondrion inner membrane</location>
        <topology evidence="1">Single-pass membrane protein</topology>
    </subcellularLocation>
</comment>
<comment type="similarity">
    <text evidence="7">Belongs to the UQCRQ/QCR8 family.</text>
</comment>
<dbReference type="EMBL" id="L06665">
    <property type="protein sequence ID" value="AAB03845.1"/>
    <property type="molecule type" value="mRNA"/>
</dbReference>
<dbReference type="EMBL" id="BC103110">
    <property type="protein sequence ID" value="AAI03111.1"/>
    <property type="molecule type" value="mRNA"/>
</dbReference>
<dbReference type="PIR" id="A24864">
    <property type="entry name" value="A24864"/>
</dbReference>
<dbReference type="RefSeq" id="NP_777230.1">
    <property type="nucleotide sequence ID" value="NM_174805.2"/>
</dbReference>
<dbReference type="PDB" id="1BCC">
    <property type="method" value="X-ray"/>
    <property type="resolution" value="3.16 A"/>
    <property type="chains" value="G=2-82"/>
</dbReference>
<dbReference type="PDB" id="1BE3">
    <property type="method" value="X-ray"/>
    <property type="resolution" value="3.00 A"/>
    <property type="chains" value="G=2-82"/>
</dbReference>
<dbReference type="PDB" id="1BGY">
    <property type="method" value="X-ray"/>
    <property type="resolution" value="3.00 A"/>
    <property type="chains" value="G/S=2-82"/>
</dbReference>
<dbReference type="PDB" id="1L0L">
    <property type="method" value="X-ray"/>
    <property type="resolution" value="2.35 A"/>
    <property type="chains" value="G=2-82"/>
</dbReference>
<dbReference type="PDB" id="1L0N">
    <property type="method" value="X-ray"/>
    <property type="resolution" value="2.60 A"/>
    <property type="chains" value="G=2-82"/>
</dbReference>
<dbReference type="PDB" id="1NTK">
    <property type="method" value="X-ray"/>
    <property type="resolution" value="2.60 A"/>
    <property type="chains" value="G=2-82"/>
</dbReference>
<dbReference type="PDB" id="1NTM">
    <property type="method" value="X-ray"/>
    <property type="resolution" value="2.40 A"/>
    <property type="chains" value="G=2-82"/>
</dbReference>
<dbReference type="PDB" id="1NTZ">
    <property type="method" value="X-ray"/>
    <property type="resolution" value="2.60 A"/>
    <property type="chains" value="G=2-82"/>
</dbReference>
<dbReference type="PDB" id="1NU1">
    <property type="method" value="X-ray"/>
    <property type="resolution" value="3.20 A"/>
    <property type="chains" value="G=2-82"/>
</dbReference>
<dbReference type="PDB" id="1PP9">
    <property type="method" value="X-ray"/>
    <property type="resolution" value="2.10 A"/>
    <property type="chains" value="G/T=2-82"/>
</dbReference>
<dbReference type="PDB" id="1PPJ">
    <property type="method" value="X-ray"/>
    <property type="resolution" value="2.10 A"/>
    <property type="chains" value="G/T=2-82"/>
</dbReference>
<dbReference type="PDB" id="1QCR">
    <property type="method" value="X-ray"/>
    <property type="resolution" value="2.70 A"/>
    <property type="chains" value="G=2-71"/>
</dbReference>
<dbReference type="PDB" id="1SQB">
    <property type="method" value="X-ray"/>
    <property type="resolution" value="2.69 A"/>
    <property type="chains" value="G=2-82"/>
</dbReference>
<dbReference type="PDB" id="1SQP">
    <property type="method" value="X-ray"/>
    <property type="resolution" value="2.70 A"/>
    <property type="chains" value="G=2-82"/>
</dbReference>
<dbReference type="PDB" id="1SQQ">
    <property type="method" value="X-ray"/>
    <property type="resolution" value="3.00 A"/>
    <property type="chains" value="G=2-82"/>
</dbReference>
<dbReference type="PDB" id="1SQV">
    <property type="method" value="X-ray"/>
    <property type="resolution" value="2.85 A"/>
    <property type="chains" value="G=2-82"/>
</dbReference>
<dbReference type="PDB" id="1SQX">
    <property type="method" value="X-ray"/>
    <property type="resolution" value="2.60 A"/>
    <property type="chains" value="G=2-82"/>
</dbReference>
<dbReference type="PDB" id="2A06">
    <property type="method" value="X-ray"/>
    <property type="resolution" value="2.10 A"/>
    <property type="chains" value="G/T=2-82"/>
</dbReference>
<dbReference type="PDB" id="2BCC">
    <property type="method" value="X-ray"/>
    <property type="resolution" value="3.50 A"/>
    <property type="chains" value="G=2-82"/>
</dbReference>
<dbReference type="PDB" id="2FYU">
    <property type="method" value="X-ray"/>
    <property type="resolution" value="2.26 A"/>
    <property type="chains" value="G=2-82"/>
</dbReference>
<dbReference type="PDB" id="2YBB">
    <property type="method" value="EM"/>
    <property type="resolution" value="19.00 A"/>
    <property type="chains" value="G/g=2-82"/>
</dbReference>
<dbReference type="PDB" id="3BCC">
    <property type="method" value="X-ray"/>
    <property type="resolution" value="3.70 A"/>
    <property type="chains" value="G=2-82"/>
</dbReference>
<dbReference type="PDB" id="4D6T">
    <property type="method" value="X-ray"/>
    <property type="resolution" value="3.57 A"/>
    <property type="chains" value="G/T=1-82"/>
</dbReference>
<dbReference type="PDB" id="4D6U">
    <property type="method" value="X-ray"/>
    <property type="resolution" value="4.09 A"/>
    <property type="chains" value="G/T=1-82"/>
</dbReference>
<dbReference type="PDB" id="5GPN">
    <property type="method" value="EM"/>
    <property type="resolution" value="5.40 A"/>
    <property type="chains" value="G/S=2-82"/>
</dbReference>
<dbReference type="PDB" id="5KLV">
    <property type="method" value="X-ray"/>
    <property type="resolution" value="2.65 A"/>
    <property type="chains" value="G=2-81"/>
</dbReference>
<dbReference type="PDB" id="5LUF">
    <property type="method" value="EM"/>
    <property type="resolution" value="9.10 A"/>
    <property type="chains" value="g/s=2-82"/>
</dbReference>
<dbReference type="PDB" id="5NMI">
    <property type="method" value="X-ray"/>
    <property type="resolution" value="3.50 A"/>
    <property type="chains" value="G/T=1-82"/>
</dbReference>
<dbReference type="PDB" id="5OKD">
    <property type="method" value="X-ray"/>
    <property type="resolution" value="3.10 A"/>
    <property type="chains" value="G=1-82"/>
</dbReference>
<dbReference type="PDB" id="6FO0">
    <property type="method" value="EM"/>
    <property type="resolution" value="4.10 A"/>
    <property type="chains" value="G/T=1-82"/>
</dbReference>
<dbReference type="PDB" id="6FO2">
    <property type="method" value="EM"/>
    <property type="resolution" value="4.40 A"/>
    <property type="chains" value="G/T=1-82"/>
</dbReference>
<dbReference type="PDB" id="6FO6">
    <property type="method" value="EM"/>
    <property type="resolution" value="4.10 A"/>
    <property type="chains" value="G/T=1-82"/>
</dbReference>
<dbReference type="PDB" id="6HAW">
    <property type="method" value="X-ray"/>
    <property type="resolution" value="3.45 A"/>
    <property type="chains" value="G=3-76"/>
</dbReference>
<dbReference type="PDB" id="6NHG">
    <property type="method" value="X-ray"/>
    <property type="resolution" value="2.80 A"/>
    <property type="chains" value="G=2-81"/>
</dbReference>
<dbReference type="PDB" id="6XVF">
    <property type="method" value="X-ray"/>
    <property type="resolution" value="3.50 A"/>
    <property type="chains" value="G=3-76"/>
</dbReference>
<dbReference type="PDB" id="6ZFS">
    <property type="method" value="X-ray"/>
    <property type="resolution" value="3.50 A"/>
    <property type="chains" value="G=2-76"/>
</dbReference>
<dbReference type="PDB" id="6ZFT">
    <property type="method" value="X-ray"/>
    <property type="resolution" value="3.30 A"/>
    <property type="chains" value="G=3-76"/>
</dbReference>
<dbReference type="PDB" id="6ZFU">
    <property type="method" value="X-ray"/>
    <property type="resolution" value="3.50 A"/>
    <property type="chains" value="G=3-76"/>
</dbReference>
<dbReference type="PDB" id="7DGQ">
    <property type="method" value="EM"/>
    <property type="resolution" value="5.00 A"/>
    <property type="chains" value="A3/r=1-82"/>
</dbReference>
<dbReference type="PDB" id="7DGR">
    <property type="method" value="EM"/>
    <property type="resolution" value="4.60 A"/>
    <property type="chains" value="A2/r=1-82"/>
</dbReference>
<dbReference type="PDB" id="7DGS">
    <property type="method" value="EM"/>
    <property type="resolution" value="7.80 A"/>
    <property type="chains" value="A2/r=1-82"/>
</dbReference>
<dbReference type="PDB" id="7DKF">
    <property type="method" value="EM"/>
    <property type="resolution" value="8.30 A"/>
    <property type="chains" value="G1/S1=1-82"/>
</dbReference>
<dbReference type="PDB" id="7R3V">
    <property type="method" value="X-ray"/>
    <property type="resolution" value="3.20 A"/>
    <property type="chains" value="G=3-76"/>
</dbReference>
<dbReference type="PDB" id="7TAY">
    <property type="method" value="X-ray"/>
    <property type="resolution" value="2.95 A"/>
    <property type="chains" value="G=2-81"/>
</dbReference>
<dbReference type="PDB" id="7TZ6">
    <property type="method" value="EM"/>
    <property type="resolution" value="2.88 A"/>
    <property type="chains" value="G/T=2-81"/>
</dbReference>
<dbReference type="PDB" id="8P65">
    <property type="method" value="EM"/>
    <property type="resolution" value="3.00 A"/>
    <property type="chains" value="G/T=1-82"/>
</dbReference>
<dbReference type="PDB" id="9GCX">
    <property type="method" value="X-ray"/>
    <property type="resolution" value="3.52 A"/>
    <property type="chains" value="G=1-82"/>
</dbReference>
<dbReference type="PDBsum" id="1BCC"/>
<dbReference type="PDBsum" id="1BE3"/>
<dbReference type="PDBsum" id="1BGY"/>
<dbReference type="PDBsum" id="1L0L"/>
<dbReference type="PDBsum" id="1L0N"/>
<dbReference type="PDBsum" id="1NTK"/>
<dbReference type="PDBsum" id="1NTM"/>
<dbReference type="PDBsum" id="1NTZ"/>
<dbReference type="PDBsum" id="1NU1"/>
<dbReference type="PDBsum" id="1PP9"/>
<dbReference type="PDBsum" id="1PPJ"/>
<dbReference type="PDBsum" id="1QCR"/>
<dbReference type="PDBsum" id="1SQB"/>
<dbReference type="PDBsum" id="1SQP"/>
<dbReference type="PDBsum" id="1SQQ"/>
<dbReference type="PDBsum" id="1SQV"/>
<dbReference type="PDBsum" id="1SQX"/>
<dbReference type="PDBsum" id="2A06"/>
<dbReference type="PDBsum" id="2BCC"/>
<dbReference type="PDBsum" id="2FYU"/>
<dbReference type="PDBsum" id="2YBB"/>
<dbReference type="PDBsum" id="3BCC"/>
<dbReference type="PDBsum" id="4D6T"/>
<dbReference type="PDBsum" id="4D6U"/>
<dbReference type="PDBsum" id="5GPN"/>
<dbReference type="PDBsum" id="5KLV"/>
<dbReference type="PDBsum" id="5LUF"/>
<dbReference type="PDBsum" id="5NMI"/>
<dbReference type="PDBsum" id="5OKD"/>
<dbReference type="PDBsum" id="6FO0"/>
<dbReference type="PDBsum" id="6FO2"/>
<dbReference type="PDBsum" id="6FO6"/>
<dbReference type="PDBsum" id="6HAW"/>
<dbReference type="PDBsum" id="6NHG"/>
<dbReference type="PDBsum" id="6XVF"/>
<dbReference type="PDBsum" id="6ZFS"/>
<dbReference type="PDBsum" id="6ZFT"/>
<dbReference type="PDBsum" id="6ZFU"/>
<dbReference type="PDBsum" id="7DGQ"/>
<dbReference type="PDBsum" id="7DGR"/>
<dbReference type="PDBsum" id="7DGS"/>
<dbReference type="PDBsum" id="7DKF"/>
<dbReference type="PDBsum" id="7R3V"/>
<dbReference type="PDBsum" id="7TAY"/>
<dbReference type="PDBsum" id="7TZ6"/>
<dbReference type="PDBsum" id="8P65"/>
<dbReference type="PDBsum" id="9GCX"/>
<dbReference type="EMDB" id="EMD-17461"/>
<dbReference type="EMDB" id="EMD-26203"/>
<dbReference type="EMDB" id="EMD-30673"/>
<dbReference type="EMDB" id="EMD-4107"/>
<dbReference type="EMDB" id="EMD-4286"/>
<dbReference type="EMDB" id="EMD-4288"/>
<dbReference type="EMDB" id="EMD-4292"/>
<dbReference type="EMDB" id="EMD-9534"/>
<dbReference type="SMR" id="P13271"/>
<dbReference type="CORUM" id="P13271"/>
<dbReference type="DIP" id="DIP-38971N"/>
<dbReference type="FunCoup" id="P13271">
    <property type="interactions" value="1232"/>
</dbReference>
<dbReference type="IntAct" id="P13271">
    <property type="interactions" value="2"/>
</dbReference>
<dbReference type="STRING" id="9913.ENSBTAP00000040860"/>
<dbReference type="GlyGen" id="P13271">
    <property type="glycosylation" value="1 site, 1 O-linked glycan (1 site)"/>
</dbReference>
<dbReference type="PaxDb" id="9913-ENSBTAP00000040860"/>
<dbReference type="GeneID" id="286885"/>
<dbReference type="KEGG" id="bta:286885"/>
<dbReference type="CTD" id="27089"/>
<dbReference type="eggNOG" id="KOG4116">
    <property type="taxonomic scope" value="Eukaryota"/>
</dbReference>
<dbReference type="HOGENOM" id="CLU_156007_2_0_1"/>
<dbReference type="InParanoid" id="P13271"/>
<dbReference type="OrthoDB" id="6683853at2759"/>
<dbReference type="TreeFam" id="TF300281"/>
<dbReference type="EvolutionaryTrace" id="P13271"/>
<dbReference type="Proteomes" id="UP000009136">
    <property type="component" value="Unplaced"/>
</dbReference>
<dbReference type="GO" id="GO:0005743">
    <property type="term" value="C:mitochondrial inner membrane"/>
    <property type="evidence" value="ECO:0007669"/>
    <property type="project" value="UniProtKB-SubCell"/>
</dbReference>
<dbReference type="GO" id="GO:0045275">
    <property type="term" value="C:respiratory chain complex III"/>
    <property type="evidence" value="ECO:0000318"/>
    <property type="project" value="GO_Central"/>
</dbReference>
<dbReference type="GO" id="GO:0021680">
    <property type="term" value="P:cerebellar Purkinje cell layer development"/>
    <property type="evidence" value="ECO:0007669"/>
    <property type="project" value="Ensembl"/>
</dbReference>
<dbReference type="GO" id="GO:0021766">
    <property type="term" value="P:hippocampus development"/>
    <property type="evidence" value="ECO:0007669"/>
    <property type="project" value="Ensembl"/>
</dbReference>
<dbReference type="GO" id="GO:0021854">
    <property type="term" value="P:hypothalamus development"/>
    <property type="evidence" value="ECO:0007669"/>
    <property type="project" value="Ensembl"/>
</dbReference>
<dbReference type="GO" id="GO:0030901">
    <property type="term" value="P:midbrain development"/>
    <property type="evidence" value="ECO:0007669"/>
    <property type="project" value="Ensembl"/>
</dbReference>
<dbReference type="GO" id="GO:0006122">
    <property type="term" value="P:mitochondrial electron transport, ubiquinol to cytochrome c"/>
    <property type="evidence" value="ECO:0000318"/>
    <property type="project" value="GO_Central"/>
</dbReference>
<dbReference type="GO" id="GO:0021548">
    <property type="term" value="P:pons development"/>
    <property type="evidence" value="ECO:0007669"/>
    <property type="project" value="Ensembl"/>
</dbReference>
<dbReference type="GO" id="GO:0021860">
    <property type="term" value="P:pyramidal neuron development"/>
    <property type="evidence" value="ECO:0007669"/>
    <property type="project" value="Ensembl"/>
</dbReference>
<dbReference type="GO" id="GO:0021539">
    <property type="term" value="P:subthalamus development"/>
    <property type="evidence" value="ECO:0007669"/>
    <property type="project" value="Ensembl"/>
</dbReference>
<dbReference type="GO" id="GO:0021794">
    <property type="term" value="P:thalamus development"/>
    <property type="evidence" value="ECO:0007669"/>
    <property type="project" value="Ensembl"/>
</dbReference>
<dbReference type="FunFam" id="1.20.5.210:FF:000001">
    <property type="entry name" value="Cytochrome b-c1 complex subunit 8"/>
    <property type="match status" value="1"/>
</dbReference>
<dbReference type="Gene3D" id="1.20.5.210">
    <property type="entry name" value="Cytochrome b-c1 complex subunit 8"/>
    <property type="match status" value="1"/>
</dbReference>
<dbReference type="InterPro" id="IPR004205">
    <property type="entry name" value="Cyt_bc1_su8"/>
</dbReference>
<dbReference type="InterPro" id="IPR036642">
    <property type="entry name" value="Cyt_bc1_su8_sf"/>
</dbReference>
<dbReference type="PANTHER" id="PTHR12119:SF2">
    <property type="entry name" value="CYTOCHROME B-C1 COMPLEX SUBUNIT 8"/>
    <property type="match status" value="1"/>
</dbReference>
<dbReference type="PANTHER" id="PTHR12119">
    <property type="entry name" value="UBIQUINOL-CYTOCHROME C REDUCTASE COMPLEX UBIQUINONE-BINDING PROTEIN QP-C"/>
    <property type="match status" value="1"/>
</dbReference>
<dbReference type="Pfam" id="PF02939">
    <property type="entry name" value="UcrQ"/>
    <property type="match status" value="1"/>
</dbReference>
<dbReference type="SUPFAM" id="SSF81508">
    <property type="entry name" value="Ubiquinone-binding protein QP-C of cytochrome bc1 complex (Ubiquinol-cytochrome c reductase)"/>
    <property type="match status" value="1"/>
</dbReference>
<keyword id="KW-0002">3D-structure</keyword>
<keyword id="KW-0007">Acetylation</keyword>
<keyword id="KW-0903">Direct protein sequencing</keyword>
<keyword id="KW-0249">Electron transport</keyword>
<keyword id="KW-0472">Membrane</keyword>
<keyword id="KW-0496">Mitochondrion</keyword>
<keyword id="KW-0999">Mitochondrion inner membrane</keyword>
<keyword id="KW-1185">Reference proteome</keyword>
<keyword id="KW-0679">Respiratory chain</keyword>
<keyword id="KW-0812">Transmembrane</keyword>
<keyword id="KW-1133">Transmembrane helix</keyword>
<keyword id="KW-0813">Transport</keyword>
<protein>
    <recommendedName>
        <fullName>Cytochrome b-c1 complex subunit 8</fullName>
    </recommendedName>
    <alternativeName>
        <fullName>Complex III subunit 8</fullName>
    </alternativeName>
    <alternativeName>
        <fullName>Complex III subunit VIII</fullName>
    </alternativeName>
    <alternativeName>
        <fullName>Ubiquinol-cytochrome c reductase complex 9.5 kDa protein</fullName>
    </alternativeName>
    <alternativeName>
        <fullName>Ubiquinol-cytochrome c reductase complex ubiquinone-binding protein QP-C</fullName>
    </alternativeName>
</protein>
<organism>
    <name type="scientific">Bos taurus</name>
    <name type="common">Bovine</name>
    <dbReference type="NCBI Taxonomy" id="9913"/>
    <lineage>
        <taxon>Eukaryota</taxon>
        <taxon>Metazoa</taxon>
        <taxon>Chordata</taxon>
        <taxon>Craniata</taxon>
        <taxon>Vertebrata</taxon>
        <taxon>Euteleostomi</taxon>
        <taxon>Mammalia</taxon>
        <taxon>Eutheria</taxon>
        <taxon>Laurasiatheria</taxon>
        <taxon>Artiodactyla</taxon>
        <taxon>Ruminantia</taxon>
        <taxon>Pecora</taxon>
        <taxon>Bovidae</taxon>
        <taxon>Bovinae</taxon>
        <taxon>Bos</taxon>
    </lineage>
</organism>
<name>QCR8_BOVIN</name>
<proteinExistence type="evidence at protein level"/>
<reference key="1">
    <citation type="journal article" date="1995" name="J. Biol. Chem.">
        <title>Cloning, gene sequencing, and expression of the small molecular mass ubiquinone-binding protein of mitochondrial ubiquinol-cytochrome c reductase.</title>
        <authorList>
            <person name="Yu L."/>
            <person name="Deng K.-P."/>
            <person name="Yu C.-A."/>
        </authorList>
    </citation>
    <scope>NUCLEOTIDE SEQUENCE [MRNA]</scope>
    <source>
        <tissue>Heart</tissue>
    </source>
</reference>
<reference key="2">
    <citation type="submission" date="2005-08" db="EMBL/GenBank/DDBJ databases">
        <authorList>
            <consortium name="NIH - Mammalian Gene Collection (MGC) project"/>
        </authorList>
    </citation>
    <scope>NUCLEOTIDE SEQUENCE [LARGE SCALE MRNA]</scope>
    <source>
        <strain>Hereford</strain>
        <tissue>Heart ventricle</tissue>
    </source>
</reference>
<reference key="3">
    <citation type="journal article" date="1986" name="FEBS Lett.">
        <title>Isolation and amino acid sequence of the 9.5 kDa protein of beef heart ubiquinol:cytochrome c reductase.</title>
        <authorList>
            <person name="Borchart U."/>
            <person name="Machleidt W."/>
            <person name="Schaegger H."/>
            <person name="Link T.A."/>
            <person name="von Jagow G."/>
        </authorList>
    </citation>
    <scope>PROTEIN SEQUENCE OF 2-82</scope>
    <source>
        <tissue>Heart</tissue>
    </source>
</reference>
<reference key="4">
    <citation type="journal article" date="1990" name="Biochemistry">
        <title>The small molecular mass ubiquinone-binding protein (QPc-9.5 kDa) in mitochondrial ubiquinol-cytochrome c reductase: isolation, ubiquinone-binding domain, and immunoinhibition.</title>
        <authorList>
            <person name="Usui S."/>
            <person name="Yu L."/>
            <person name="Yu C.A."/>
        </authorList>
    </citation>
    <scope>PROTEIN SEQUENCE OF 2-14 AND 50-58</scope>
</reference>
<reference key="5">
    <citation type="journal article" date="1997" name="Science">
        <title>Crystal structure of the cytochrome bc1 complex from bovine heart mitochondria.</title>
        <authorList>
            <person name="Xia D."/>
            <person name="Yu C.A."/>
            <person name="Kim H."/>
            <person name="Xia J.Z."/>
            <person name="Kachurin A.M."/>
            <person name="Zhang L."/>
            <person name="Yu L."/>
            <person name="Deisenhofer J."/>
        </authorList>
    </citation>
    <scope>X-RAY CRYSTALLOGRAPHY (2.7 ANGSTROMS)</scope>
</reference>
<reference key="6">
    <citation type="journal article" date="1997" name="Science">
        <authorList>
            <person name="Xia D."/>
            <person name="Yu C.A."/>
            <person name="Kim H."/>
            <person name="Xia J.Z."/>
            <person name="Kachurin A.M."/>
            <person name="Zhang L."/>
            <person name="Yu L."/>
            <person name="Deisenhofer J."/>
        </authorList>
    </citation>
    <scope>ERRATUM OF PUBMED:9204897</scope>
</reference>
<reference key="7">
    <citation type="journal article" date="1998" name="Science">
        <title>Complete structure of the 11-subunit bovine mitochondrial cytochrome bc1 complex.</title>
        <authorList>
            <person name="Iwata S."/>
            <person name="Lee J.W."/>
            <person name="Okada K."/>
            <person name="Lee J.K."/>
            <person name="Iwata M."/>
            <person name="Rasmussen B."/>
            <person name="Link T.A."/>
            <person name="Ramaswamy S."/>
            <person name="Jap B.K."/>
        </authorList>
    </citation>
    <scope>X-RAY CRYSTALLOGRAPHY (3.0 ANGSTROMS)</scope>
</reference>
<reference key="8">
    <citation type="journal article" date="2002" name="Biochemistry">
        <title>The crystal structure of mitochondrial cytochrome bc1 in complex with famoxadone: the role of aromatic-aromatic interaction in inhibition.</title>
        <authorList>
            <person name="Gao X."/>
            <person name="Wen X."/>
            <person name="Yu C."/>
            <person name="Esser L."/>
            <person name="Tsao S."/>
            <person name="Quinn B."/>
            <person name="Zhang L."/>
            <person name="Yu L."/>
            <person name="Xia D."/>
        </authorList>
    </citation>
    <scope>X-RAY CRYSTALLOGRAPHY (2.35 ANGSTROMS)</scope>
</reference>
<reference key="9">
    <citation type="journal article" date="2004" name="J. Mol. Biol.">
        <title>Crystallographic studies of quinol oxidation site inhibitors: a modified classification of inhibitors for the cytochrome bc(1) complex.</title>
        <authorList>
            <person name="Esser L."/>
            <person name="Quinn B."/>
            <person name="Li Y.F."/>
            <person name="Zhang M."/>
            <person name="Elberry M."/>
            <person name="Yu L."/>
            <person name="Yu C.A."/>
            <person name="Xia D."/>
        </authorList>
    </citation>
    <scope>X-RAY CRYSTALLOGRAPHY (2.69 ANGSTROMS)</scope>
</reference>
<reference key="10">
    <citation type="journal article" date="2005" name="J. Mol. Biol.">
        <title>Binding of the respiratory chain inhibitor antimycin to the mitochondrial bc1 complex: a new crystal structure reveals an altered intramolecular hydrogen-bonding pattern.</title>
        <authorList>
            <person name="Huang L.S."/>
            <person name="Cobessi D."/>
            <person name="Tung E.Y."/>
            <person name="Berry E.A."/>
        </authorList>
    </citation>
    <scope>X-RAY CRYSTALLOGRAPHY (2.1 ANGSTROMS)</scope>
</reference>
<reference key="11">
    <citation type="journal article" date="2006" name="Proc. Natl. Acad. Sci. U.S.A.">
        <title>Surface-modulated motion switch: capture and release of iron-sulfur protein in the cytochrome bc1 complex.</title>
        <authorList>
            <person name="Esser L."/>
            <person name="Gong X."/>
            <person name="Yang S."/>
            <person name="Yu L."/>
            <person name="Yu C.A."/>
            <person name="Xia D."/>
        </authorList>
    </citation>
    <scope>X-RAY CRYSTALLOGRAPHY (2.26 ANGSTROMS)</scope>
</reference>
<reference key="12">
    <citation type="journal article" date="2016" name="Elife">
        <title>Functional asymmetry and electron flow in the bovine respirasome.</title>
        <authorList>
            <person name="Sousa J.S."/>
            <person name="Mills D.J."/>
            <person name="Vonck J."/>
            <person name="Kuehlbrandt W."/>
        </authorList>
    </citation>
    <scope>STRUCTURE BY ELECTRON MICROSCOPY (9.10 ANGSTROMS)</scope>
    <scope>SUBUNIT</scope>
</reference>